<name>RL15_SHEB8</name>
<comment type="function">
    <text evidence="1">Binds to the 23S rRNA.</text>
</comment>
<comment type="subunit">
    <text evidence="1">Part of the 50S ribosomal subunit.</text>
</comment>
<comment type="similarity">
    <text evidence="1">Belongs to the universal ribosomal protein uL15 family.</text>
</comment>
<dbReference type="EMBL" id="CP000753">
    <property type="protein sequence ID" value="ABS06386.1"/>
    <property type="molecule type" value="Genomic_DNA"/>
</dbReference>
<dbReference type="RefSeq" id="WP_006083581.1">
    <property type="nucleotide sequence ID" value="NC_009665.1"/>
</dbReference>
<dbReference type="SMR" id="A6WHU7"/>
<dbReference type="GeneID" id="67441779"/>
<dbReference type="KEGG" id="sbm:Shew185_0215"/>
<dbReference type="HOGENOM" id="CLU_055188_4_2_6"/>
<dbReference type="GO" id="GO:0022625">
    <property type="term" value="C:cytosolic large ribosomal subunit"/>
    <property type="evidence" value="ECO:0007669"/>
    <property type="project" value="TreeGrafter"/>
</dbReference>
<dbReference type="GO" id="GO:0019843">
    <property type="term" value="F:rRNA binding"/>
    <property type="evidence" value="ECO:0007669"/>
    <property type="project" value="UniProtKB-UniRule"/>
</dbReference>
<dbReference type="GO" id="GO:0003735">
    <property type="term" value="F:structural constituent of ribosome"/>
    <property type="evidence" value="ECO:0007669"/>
    <property type="project" value="InterPro"/>
</dbReference>
<dbReference type="GO" id="GO:0006412">
    <property type="term" value="P:translation"/>
    <property type="evidence" value="ECO:0007669"/>
    <property type="project" value="UniProtKB-UniRule"/>
</dbReference>
<dbReference type="FunFam" id="3.100.10.10:FF:000003">
    <property type="entry name" value="50S ribosomal protein L15"/>
    <property type="match status" value="1"/>
</dbReference>
<dbReference type="Gene3D" id="3.100.10.10">
    <property type="match status" value="1"/>
</dbReference>
<dbReference type="HAMAP" id="MF_01341">
    <property type="entry name" value="Ribosomal_uL15"/>
    <property type="match status" value="1"/>
</dbReference>
<dbReference type="InterPro" id="IPR030878">
    <property type="entry name" value="Ribosomal_uL15"/>
</dbReference>
<dbReference type="InterPro" id="IPR021131">
    <property type="entry name" value="Ribosomal_uL15/eL18"/>
</dbReference>
<dbReference type="InterPro" id="IPR036227">
    <property type="entry name" value="Ribosomal_uL15/eL18_sf"/>
</dbReference>
<dbReference type="InterPro" id="IPR005749">
    <property type="entry name" value="Ribosomal_uL15_bac-type"/>
</dbReference>
<dbReference type="InterPro" id="IPR001196">
    <property type="entry name" value="Ribosomal_uL15_CS"/>
</dbReference>
<dbReference type="NCBIfam" id="TIGR01071">
    <property type="entry name" value="rplO_bact"/>
    <property type="match status" value="1"/>
</dbReference>
<dbReference type="PANTHER" id="PTHR12934">
    <property type="entry name" value="50S RIBOSOMAL PROTEIN L15"/>
    <property type="match status" value="1"/>
</dbReference>
<dbReference type="PANTHER" id="PTHR12934:SF11">
    <property type="entry name" value="LARGE RIBOSOMAL SUBUNIT PROTEIN UL15M"/>
    <property type="match status" value="1"/>
</dbReference>
<dbReference type="Pfam" id="PF00828">
    <property type="entry name" value="Ribosomal_L27A"/>
    <property type="match status" value="1"/>
</dbReference>
<dbReference type="SUPFAM" id="SSF52080">
    <property type="entry name" value="Ribosomal proteins L15p and L18e"/>
    <property type="match status" value="1"/>
</dbReference>
<dbReference type="PROSITE" id="PS00475">
    <property type="entry name" value="RIBOSOMAL_L15"/>
    <property type="match status" value="1"/>
</dbReference>
<organism>
    <name type="scientific">Shewanella baltica (strain OS185)</name>
    <dbReference type="NCBI Taxonomy" id="402882"/>
    <lineage>
        <taxon>Bacteria</taxon>
        <taxon>Pseudomonadati</taxon>
        <taxon>Pseudomonadota</taxon>
        <taxon>Gammaproteobacteria</taxon>
        <taxon>Alteromonadales</taxon>
        <taxon>Shewanellaceae</taxon>
        <taxon>Shewanella</taxon>
    </lineage>
</organism>
<accession>A6WHU7</accession>
<reference key="1">
    <citation type="submission" date="2007-07" db="EMBL/GenBank/DDBJ databases">
        <title>Complete sequence of chromosome of Shewanella baltica OS185.</title>
        <authorList>
            <consortium name="US DOE Joint Genome Institute"/>
            <person name="Copeland A."/>
            <person name="Lucas S."/>
            <person name="Lapidus A."/>
            <person name="Barry K."/>
            <person name="Glavina del Rio T."/>
            <person name="Dalin E."/>
            <person name="Tice H."/>
            <person name="Pitluck S."/>
            <person name="Sims D."/>
            <person name="Brettin T."/>
            <person name="Bruce D."/>
            <person name="Detter J.C."/>
            <person name="Han C."/>
            <person name="Schmutz J."/>
            <person name="Larimer F."/>
            <person name="Land M."/>
            <person name="Hauser L."/>
            <person name="Kyrpides N."/>
            <person name="Mikhailova N."/>
            <person name="Brettar I."/>
            <person name="Rodrigues J."/>
            <person name="Konstantinidis K."/>
            <person name="Tiedje J."/>
            <person name="Richardson P."/>
        </authorList>
    </citation>
    <scope>NUCLEOTIDE SEQUENCE [LARGE SCALE GENOMIC DNA]</scope>
    <source>
        <strain>OS185</strain>
    </source>
</reference>
<keyword id="KW-0687">Ribonucleoprotein</keyword>
<keyword id="KW-0689">Ribosomal protein</keyword>
<keyword id="KW-0694">RNA-binding</keyword>
<keyword id="KW-0699">rRNA-binding</keyword>
<proteinExistence type="inferred from homology"/>
<sequence>MRLNTLSPAAGSKHAPKRVGRGMGSGLGKTAGRGHKGQKSRSGGGVRPGFEGGQMPLKIRLPKFGFTSRRAMVTAEVRVLELAKVNGDVIDLNALKDANVITRNIQFAKIVLSGTIERPVTVKGLKVTKGARAAIEAAGGKIEE</sequence>
<evidence type="ECO:0000255" key="1">
    <source>
        <dbReference type="HAMAP-Rule" id="MF_01341"/>
    </source>
</evidence>
<evidence type="ECO:0000256" key="2">
    <source>
        <dbReference type="SAM" id="MobiDB-lite"/>
    </source>
</evidence>
<evidence type="ECO:0000305" key="3"/>
<feature type="chain" id="PRO_1000054536" description="Large ribosomal subunit protein uL15">
    <location>
        <begin position="1"/>
        <end position="144"/>
    </location>
</feature>
<feature type="region of interest" description="Disordered" evidence="2">
    <location>
        <begin position="1"/>
        <end position="54"/>
    </location>
</feature>
<feature type="compositionally biased region" description="Gly residues" evidence="2">
    <location>
        <begin position="21"/>
        <end position="31"/>
    </location>
</feature>
<feature type="compositionally biased region" description="Gly residues" evidence="2">
    <location>
        <begin position="42"/>
        <end position="52"/>
    </location>
</feature>
<gene>
    <name evidence="1" type="primary">rplO</name>
    <name type="ordered locus">Shew185_0215</name>
</gene>
<protein>
    <recommendedName>
        <fullName evidence="1">Large ribosomal subunit protein uL15</fullName>
    </recommendedName>
    <alternativeName>
        <fullName evidence="3">50S ribosomal protein L15</fullName>
    </alternativeName>
</protein>